<gene>
    <name evidence="1" type="primary">rplA</name>
    <name type="ordered locus">BCQ_0111</name>
</gene>
<name>RL1_BACCQ</name>
<protein>
    <recommendedName>
        <fullName evidence="1">Large ribosomal subunit protein uL1</fullName>
    </recommendedName>
    <alternativeName>
        <fullName evidence="2">50S ribosomal protein L1</fullName>
    </alternativeName>
</protein>
<organism>
    <name type="scientific">Bacillus cereus (strain Q1)</name>
    <dbReference type="NCBI Taxonomy" id="361100"/>
    <lineage>
        <taxon>Bacteria</taxon>
        <taxon>Bacillati</taxon>
        <taxon>Bacillota</taxon>
        <taxon>Bacilli</taxon>
        <taxon>Bacillales</taxon>
        <taxon>Bacillaceae</taxon>
        <taxon>Bacillus</taxon>
        <taxon>Bacillus cereus group</taxon>
    </lineage>
</organism>
<evidence type="ECO:0000255" key="1">
    <source>
        <dbReference type="HAMAP-Rule" id="MF_01318"/>
    </source>
</evidence>
<evidence type="ECO:0000305" key="2"/>
<dbReference type="EMBL" id="CP000227">
    <property type="protein sequence ID" value="ACM10626.1"/>
    <property type="molecule type" value="Genomic_DNA"/>
</dbReference>
<dbReference type="SMR" id="B9IZI2"/>
<dbReference type="KEGG" id="bcq:BCQ_0111"/>
<dbReference type="HOGENOM" id="CLU_062853_0_0_9"/>
<dbReference type="Proteomes" id="UP000000441">
    <property type="component" value="Chromosome"/>
</dbReference>
<dbReference type="GO" id="GO:0015934">
    <property type="term" value="C:large ribosomal subunit"/>
    <property type="evidence" value="ECO:0007669"/>
    <property type="project" value="InterPro"/>
</dbReference>
<dbReference type="GO" id="GO:0019843">
    <property type="term" value="F:rRNA binding"/>
    <property type="evidence" value="ECO:0007669"/>
    <property type="project" value="UniProtKB-UniRule"/>
</dbReference>
<dbReference type="GO" id="GO:0003735">
    <property type="term" value="F:structural constituent of ribosome"/>
    <property type="evidence" value="ECO:0007669"/>
    <property type="project" value="InterPro"/>
</dbReference>
<dbReference type="GO" id="GO:0000049">
    <property type="term" value="F:tRNA binding"/>
    <property type="evidence" value="ECO:0007669"/>
    <property type="project" value="UniProtKB-KW"/>
</dbReference>
<dbReference type="GO" id="GO:0006417">
    <property type="term" value="P:regulation of translation"/>
    <property type="evidence" value="ECO:0007669"/>
    <property type="project" value="UniProtKB-KW"/>
</dbReference>
<dbReference type="GO" id="GO:0006412">
    <property type="term" value="P:translation"/>
    <property type="evidence" value="ECO:0007669"/>
    <property type="project" value="UniProtKB-UniRule"/>
</dbReference>
<dbReference type="CDD" id="cd00403">
    <property type="entry name" value="Ribosomal_L1"/>
    <property type="match status" value="1"/>
</dbReference>
<dbReference type="FunFam" id="3.40.50.790:FF:000001">
    <property type="entry name" value="50S ribosomal protein L1"/>
    <property type="match status" value="1"/>
</dbReference>
<dbReference type="Gene3D" id="3.30.190.20">
    <property type="match status" value="1"/>
</dbReference>
<dbReference type="Gene3D" id="3.40.50.790">
    <property type="match status" value="1"/>
</dbReference>
<dbReference type="HAMAP" id="MF_01318_B">
    <property type="entry name" value="Ribosomal_uL1_B"/>
    <property type="match status" value="1"/>
</dbReference>
<dbReference type="InterPro" id="IPR005878">
    <property type="entry name" value="Ribosom_uL1_bac-type"/>
</dbReference>
<dbReference type="InterPro" id="IPR002143">
    <property type="entry name" value="Ribosomal_uL1"/>
</dbReference>
<dbReference type="InterPro" id="IPR023674">
    <property type="entry name" value="Ribosomal_uL1-like"/>
</dbReference>
<dbReference type="InterPro" id="IPR028364">
    <property type="entry name" value="Ribosomal_uL1/biogenesis"/>
</dbReference>
<dbReference type="InterPro" id="IPR016095">
    <property type="entry name" value="Ribosomal_uL1_3-a/b-sand"/>
</dbReference>
<dbReference type="InterPro" id="IPR023673">
    <property type="entry name" value="Ribosomal_uL1_CS"/>
</dbReference>
<dbReference type="NCBIfam" id="TIGR01169">
    <property type="entry name" value="rplA_bact"/>
    <property type="match status" value="1"/>
</dbReference>
<dbReference type="PANTHER" id="PTHR36427">
    <property type="entry name" value="54S RIBOSOMAL PROTEIN L1, MITOCHONDRIAL"/>
    <property type="match status" value="1"/>
</dbReference>
<dbReference type="PANTHER" id="PTHR36427:SF3">
    <property type="entry name" value="LARGE RIBOSOMAL SUBUNIT PROTEIN UL1M"/>
    <property type="match status" value="1"/>
</dbReference>
<dbReference type="Pfam" id="PF00687">
    <property type="entry name" value="Ribosomal_L1"/>
    <property type="match status" value="1"/>
</dbReference>
<dbReference type="PIRSF" id="PIRSF002155">
    <property type="entry name" value="Ribosomal_L1"/>
    <property type="match status" value="1"/>
</dbReference>
<dbReference type="SUPFAM" id="SSF56808">
    <property type="entry name" value="Ribosomal protein L1"/>
    <property type="match status" value="1"/>
</dbReference>
<dbReference type="PROSITE" id="PS01199">
    <property type="entry name" value="RIBOSOMAL_L1"/>
    <property type="match status" value="1"/>
</dbReference>
<accession>B9IZI2</accession>
<feature type="chain" id="PRO_1000165659" description="Large ribosomal subunit protein uL1">
    <location>
        <begin position="1"/>
        <end position="230"/>
    </location>
</feature>
<sequence length="230" mass="24481">MAKRGKKYVEAAKLVDRAAAYSATEAVELVKKTNTAKFDATVEAAFRLGVDPKKADQQIRGAVVLPHGTGKVQRVLVFAKGEKAKEAEAAGADFVGDADYIGKIQQGWFDFDVVVATPDMMGEVGKLGRVLGPKGLMPNPKTGTVTFDVTKAVNEIKAGKVEYRVDKAGNIHVPIGKVSFEDAKLVENFRTIADTLQKVKPAAAKGTYMKNVTVASTMGPGVRVDVSTLA</sequence>
<comment type="function">
    <text evidence="1">Binds directly to 23S rRNA. The L1 stalk is quite mobile in the ribosome, and is involved in E site tRNA release.</text>
</comment>
<comment type="function">
    <text evidence="1">Protein L1 is also a translational repressor protein, it controls the translation of the L11 operon by binding to its mRNA.</text>
</comment>
<comment type="subunit">
    <text evidence="1">Part of the 50S ribosomal subunit.</text>
</comment>
<comment type="similarity">
    <text evidence="1">Belongs to the universal ribosomal protein uL1 family.</text>
</comment>
<reference key="1">
    <citation type="journal article" date="2009" name="J. Bacteriol.">
        <title>Complete genome sequence of the extremophilic Bacillus cereus strain Q1 with industrial applications.</title>
        <authorList>
            <person name="Xiong Z."/>
            <person name="Jiang Y."/>
            <person name="Qi D."/>
            <person name="Lu H."/>
            <person name="Yang F."/>
            <person name="Yang J."/>
            <person name="Chen L."/>
            <person name="Sun L."/>
            <person name="Xu X."/>
            <person name="Xue Y."/>
            <person name="Zhu Y."/>
            <person name="Jin Q."/>
        </authorList>
    </citation>
    <scope>NUCLEOTIDE SEQUENCE [LARGE SCALE GENOMIC DNA]</scope>
    <source>
        <strain>Q1</strain>
    </source>
</reference>
<keyword id="KW-0678">Repressor</keyword>
<keyword id="KW-0687">Ribonucleoprotein</keyword>
<keyword id="KW-0689">Ribosomal protein</keyword>
<keyword id="KW-0694">RNA-binding</keyword>
<keyword id="KW-0699">rRNA-binding</keyword>
<keyword id="KW-0810">Translation regulation</keyword>
<keyword id="KW-0820">tRNA-binding</keyword>
<proteinExistence type="inferred from homology"/>